<feature type="chain" id="PRO_0000206835" description="Non-specific ribonucleoside hydrolase RihC">
    <location>
        <begin position="1"/>
        <end position="304"/>
    </location>
</feature>
<feature type="active site" evidence="1">
    <location>
        <position position="235"/>
    </location>
</feature>
<gene>
    <name evidence="1" type="primary">rihC</name>
    <name type="ordered locus">SPA0052</name>
</gene>
<evidence type="ECO:0000255" key="1">
    <source>
        <dbReference type="HAMAP-Rule" id="MF_01432"/>
    </source>
</evidence>
<keyword id="KW-0326">Glycosidase</keyword>
<keyword id="KW-0378">Hydrolase</keyword>
<protein>
    <recommendedName>
        <fullName evidence="1">Non-specific ribonucleoside hydrolase RihC</fullName>
        <ecNumber evidence="1">3.2.-.-</ecNumber>
    </recommendedName>
    <alternativeName>
        <fullName evidence="1">Purine/pyrimidine ribonucleoside hydrolase</fullName>
    </alternativeName>
</protein>
<accession>Q5PKI2</accession>
<reference key="1">
    <citation type="journal article" date="2004" name="Nat. Genet.">
        <title>Comparison of genome degradation in Paratyphi A and Typhi, human-restricted serovars of Salmonella enterica that cause typhoid.</title>
        <authorList>
            <person name="McClelland M."/>
            <person name="Sanderson K.E."/>
            <person name="Clifton S.W."/>
            <person name="Latreille P."/>
            <person name="Porwollik S."/>
            <person name="Sabo A."/>
            <person name="Meyer R."/>
            <person name="Bieri T."/>
            <person name="Ozersky P."/>
            <person name="McLellan M."/>
            <person name="Harkins C.R."/>
            <person name="Wang C."/>
            <person name="Nguyen C."/>
            <person name="Berghoff A."/>
            <person name="Elliott G."/>
            <person name="Kohlberg S."/>
            <person name="Strong C."/>
            <person name="Du F."/>
            <person name="Carter J."/>
            <person name="Kremizki C."/>
            <person name="Layman D."/>
            <person name="Leonard S."/>
            <person name="Sun H."/>
            <person name="Fulton L."/>
            <person name="Nash W."/>
            <person name="Miner T."/>
            <person name="Minx P."/>
            <person name="Delehaunty K."/>
            <person name="Fronick C."/>
            <person name="Magrini V."/>
            <person name="Nhan M."/>
            <person name="Warren W."/>
            <person name="Florea L."/>
            <person name="Spieth J."/>
            <person name="Wilson R.K."/>
        </authorList>
    </citation>
    <scope>NUCLEOTIDE SEQUENCE [LARGE SCALE GENOMIC DNA]</scope>
    <source>
        <strain>ATCC 9150 / SARB42</strain>
    </source>
</reference>
<proteinExistence type="inferred from homology"/>
<comment type="function">
    <text evidence="1">Hydrolyzes both purine and pyrimidine ribonucleosides with a broad-substrate specificity.</text>
</comment>
<comment type="similarity">
    <text evidence="1">Belongs to the IUNH family. RihC subfamily.</text>
</comment>
<organism>
    <name type="scientific">Salmonella paratyphi A (strain ATCC 9150 / SARB42)</name>
    <dbReference type="NCBI Taxonomy" id="295319"/>
    <lineage>
        <taxon>Bacteria</taxon>
        <taxon>Pseudomonadati</taxon>
        <taxon>Pseudomonadota</taxon>
        <taxon>Gammaproteobacteria</taxon>
        <taxon>Enterobacterales</taxon>
        <taxon>Enterobacteriaceae</taxon>
        <taxon>Salmonella</taxon>
    </lineage>
</organism>
<name>RIHC_SALPA</name>
<sequence length="304" mass="33011">MTASLHIILDTDPGIDDAAAIAAALFAPQLDLQLITTVAGNVSVEKTTRNALQLLHFWNSDIPLAQGAATPLLRPLRDAAYVHGESGMEGYDFVDHQRQPLAKPAFISIRDVLMNAPEPMTLVAIGPLTNIALLLMHYPECACNIRRLVLMGGSAGRGNFTPNAEFNIAVDPEAAAHVFRSGIEIVMCGLDVTNQAMLSPDFLNKLPALNRTGKMLHSLFNHYRSGSMRTGVRMHDLCAIAWLVRPELFTLQSCFVAVETQGEYTAGTTVVDIEGRLGQPANAQMALDVDGFRQWVAEVFAYAP</sequence>
<dbReference type="EC" id="3.2.-.-" evidence="1"/>
<dbReference type="EMBL" id="CP000026">
    <property type="protein sequence ID" value="AAV76087.1"/>
    <property type="molecule type" value="Genomic_DNA"/>
</dbReference>
<dbReference type="RefSeq" id="WP_000127284.1">
    <property type="nucleotide sequence ID" value="NC_006511.1"/>
</dbReference>
<dbReference type="SMR" id="Q5PKI2"/>
<dbReference type="KEGG" id="spt:SPA0052"/>
<dbReference type="HOGENOM" id="CLU_036838_2_2_6"/>
<dbReference type="Proteomes" id="UP000008185">
    <property type="component" value="Chromosome"/>
</dbReference>
<dbReference type="GO" id="GO:0005829">
    <property type="term" value="C:cytosol"/>
    <property type="evidence" value="ECO:0007669"/>
    <property type="project" value="TreeGrafter"/>
</dbReference>
<dbReference type="GO" id="GO:0008477">
    <property type="term" value="F:purine nucleosidase activity"/>
    <property type="evidence" value="ECO:0007669"/>
    <property type="project" value="TreeGrafter"/>
</dbReference>
<dbReference type="GO" id="GO:0006144">
    <property type="term" value="P:purine nucleobase metabolic process"/>
    <property type="evidence" value="ECO:0007669"/>
    <property type="project" value="UniProtKB-UniRule"/>
</dbReference>
<dbReference type="GO" id="GO:0006152">
    <property type="term" value="P:purine nucleoside catabolic process"/>
    <property type="evidence" value="ECO:0007669"/>
    <property type="project" value="TreeGrafter"/>
</dbReference>
<dbReference type="GO" id="GO:0006206">
    <property type="term" value="P:pyrimidine nucleobase metabolic process"/>
    <property type="evidence" value="ECO:0007669"/>
    <property type="project" value="UniProtKB-UniRule"/>
</dbReference>
<dbReference type="CDD" id="cd02651">
    <property type="entry name" value="nuc_hydro_IU_UC_XIUA"/>
    <property type="match status" value="1"/>
</dbReference>
<dbReference type="FunFam" id="3.90.245.10:FF:000002">
    <property type="entry name" value="Non-specific ribonucleoside hydrolase RihC"/>
    <property type="match status" value="1"/>
</dbReference>
<dbReference type="Gene3D" id="3.90.245.10">
    <property type="entry name" value="Ribonucleoside hydrolase-like"/>
    <property type="match status" value="1"/>
</dbReference>
<dbReference type="HAMAP" id="MF_01432">
    <property type="entry name" value="Nucleosid_hydro_RihC"/>
    <property type="match status" value="1"/>
</dbReference>
<dbReference type="InterPro" id="IPR001910">
    <property type="entry name" value="Inosine/uridine_hydrolase_dom"/>
</dbReference>
<dbReference type="InterPro" id="IPR023186">
    <property type="entry name" value="IUNH"/>
</dbReference>
<dbReference type="InterPro" id="IPR022976">
    <property type="entry name" value="Nucleosid_hydro_RihC_nonspecif"/>
</dbReference>
<dbReference type="InterPro" id="IPR036452">
    <property type="entry name" value="Ribo_hydro-like"/>
</dbReference>
<dbReference type="NCBIfam" id="NF008036">
    <property type="entry name" value="PRK10768.1"/>
    <property type="match status" value="1"/>
</dbReference>
<dbReference type="PANTHER" id="PTHR12304">
    <property type="entry name" value="INOSINE-URIDINE PREFERRING NUCLEOSIDE HYDROLASE"/>
    <property type="match status" value="1"/>
</dbReference>
<dbReference type="PANTHER" id="PTHR12304:SF15">
    <property type="entry name" value="NON-SPECIFIC RIBONUCLEOSIDE HYDROLASE RIHC"/>
    <property type="match status" value="1"/>
</dbReference>
<dbReference type="Pfam" id="PF01156">
    <property type="entry name" value="IU_nuc_hydro"/>
    <property type="match status" value="1"/>
</dbReference>
<dbReference type="SUPFAM" id="SSF53590">
    <property type="entry name" value="Nucleoside hydrolase"/>
    <property type="match status" value="1"/>
</dbReference>